<keyword id="KW-0963">Cytoplasm</keyword>
<keyword id="KW-0539">Nucleus</keyword>
<keyword id="KW-0597">Phosphoprotein</keyword>
<keyword id="KW-1185">Reference proteome</keyword>
<keyword id="KW-0694">RNA-binding</keyword>
<organism>
    <name type="scientific">Schizosaccharomyces pombe (strain 972 / ATCC 24843)</name>
    <name type="common">Fission yeast</name>
    <dbReference type="NCBI Taxonomy" id="284812"/>
    <lineage>
        <taxon>Eukaryota</taxon>
        <taxon>Fungi</taxon>
        <taxon>Dikarya</taxon>
        <taxon>Ascomycota</taxon>
        <taxon>Taphrinomycotina</taxon>
        <taxon>Schizosaccharomycetes</taxon>
        <taxon>Schizosaccharomycetales</taxon>
        <taxon>Schizosaccharomycetaceae</taxon>
        <taxon>Schizosaccharomyces</taxon>
    </lineage>
</organism>
<evidence type="ECO:0000255" key="1">
    <source>
        <dbReference type="PROSITE-ProRule" id="PRU00181"/>
    </source>
</evidence>
<evidence type="ECO:0000256" key="2">
    <source>
        <dbReference type="SAM" id="MobiDB-lite"/>
    </source>
</evidence>
<evidence type="ECO:0000269" key="3">
    <source>
    </source>
</evidence>
<evidence type="ECO:0000269" key="4">
    <source>
    </source>
</evidence>
<evidence type="ECO:0000305" key="5"/>
<comment type="subcellular location">
    <subcellularLocation>
        <location evidence="3">Cytoplasm</location>
    </subcellularLocation>
    <subcellularLocation>
        <location evidence="3">Nucleus</location>
    </subcellularLocation>
</comment>
<comment type="similarity">
    <text evidence="5">Belongs to the EIF1AD family.</text>
</comment>
<dbReference type="EMBL" id="CU329671">
    <property type="protein sequence ID" value="CAB46761.1"/>
    <property type="molecule type" value="Genomic_DNA"/>
</dbReference>
<dbReference type="PIR" id="T39422">
    <property type="entry name" value="T39422"/>
</dbReference>
<dbReference type="SMR" id="Q9Y803"/>
<dbReference type="FunCoup" id="Q9Y803">
    <property type="interactions" value="723"/>
</dbReference>
<dbReference type="STRING" id="284812.Q9Y803"/>
<dbReference type="iPTMnet" id="Q9Y803"/>
<dbReference type="PaxDb" id="4896-SPBC146.08c.1"/>
<dbReference type="EnsemblFungi" id="SPBC146.08c.1">
    <property type="protein sequence ID" value="SPBC146.08c.1:pep"/>
    <property type="gene ID" value="SPBC146.08c"/>
</dbReference>
<dbReference type="KEGG" id="spo:2539677"/>
<dbReference type="PomBase" id="SPBC146.08c"/>
<dbReference type="VEuPathDB" id="FungiDB:SPBC146.08c"/>
<dbReference type="eggNOG" id="KOG2925">
    <property type="taxonomic scope" value="Eukaryota"/>
</dbReference>
<dbReference type="HOGENOM" id="CLU_106477_4_1_1"/>
<dbReference type="InParanoid" id="Q9Y803"/>
<dbReference type="OMA" id="WRKQSYW"/>
<dbReference type="PhylomeDB" id="Q9Y803"/>
<dbReference type="PRO" id="PR:Q9Y803"/>
<dbReference type="Proteomes" id="UP000002485">
    <property type="component" value="Chromosome II"/>
</dbReference>
<dbReference type="GO" id="GO:0005829">
    <property type="term" value="C:cytosol"/>
    <property type="evidence" value="ECO:0007005"/>
    <property type="project" value="PomBase"/>
</dbReference>
<dbReference type="GO" id="GO:0005634">
    <property type="term" value="C:nucleus"/>
    <property type="evidence" value="ECO:0007005"/>
    <property type="project" value="PomBase"/>
</dbReference>
<dbReference type="GO" id="GO:0003723">
    <property type="term" value="F:RNA binding"/>
    <property type="evidence" value="ECO:0007669"/>
    <property type="project" value="UniProtKB-KW"/>
</dbReference>
<dbReference type="GO" id="GO:0003743">
    <property type="term" value="F:translation initiation factor activity"/>
    <property type="evidence" value="ECO:0007669"/>
    <property type="project" value="InterPro"/>
</dbReference>
<dbReference type="GO" id="GO:0002183">
    <property type="term" value="P:cytoplasmic translational initiation"/>
    <property type="evidence" value="ECO:0000303"/>
    <property type="project" value="PomBase"/>
</dbReference>
<dbReference type="Gene3D" id="2.40.50.140">
    <property type="entry name" value="Nucleic acid-binding proteins"/>
    <property type="match status" value="1"/>
</dbReference>
<dbReference type="InterPro" id="IPR039294">
    <property type="entry name" value="EIF1AD"/>
</dbReference>
<dbReference type="InterPro" id="IPR012340">
    <property type="entry name" value="NA-bd_OB-fold"/>
</dbReference>
<dbReference type="InterPro" id="IPR006196">
    <property type="entry name" value="RNA-binding_domain_S1_IF1"/>
</dbReference>
<dbReference type="InterPro" id="IPR001253">
    <property type="entry name" value="TIF_eIF-1A"/>
</dbReference>
<dbReference type="PANTHER" id="PTHR21641:SF0">
    <property type="entry name" value="RNA-BINDING PROTEIN EIF1AD-RELATED"/>
    <property type="match status" value="1"/>
</dbReference>
<dbReference type="PANTHER" id="PTHR21641">
    <property type="entry name" value="TRANSLATION INITIATION FACTOR-RELATED"/>
    <property type="match status" value="1"/>
</dbReference>
<dbReference type="Pfam" id="PF01176">
    <property type="entry name" value="eIF-1a"/>
    <property type="match status" value="1"/>
</dbReference>
<dbReference type="SMART" id="SM00652">
    <property type="entry name" value="eIF1a"/>
    <property type="match status" value="1"/>
</dbReference>
<dbReference type="SUPFAM" id="SSF50249">
    <property type="entry name" value="Nucleic acid-binding proteins"/>
    <property type="match status" value="1"/>
</dbReference>
<dbReference type="PROSITE" id="PS50832">
    <property type="entry name" value="S1_IF1_TYPE"/>
    <property type="match status" value="1"/>
</dbReference>
<feature type="chain" id="PRO_0000317699" description="S1-like domain-containing protein C146.08c">
    <location>
        <begin position="1"/>
        <end position="127"/>
    </location>
</feature>
<feature type="domain" description="S1-like" evidence="1">
    <location>
        <begin position="10"/>
        <end position="86"/>
    </location>
</feature>
<feature type="region of interest" description="Disordered" evidence="2">
    <location>
        <begin position="107"/>
        <end position="127"/>
    </location>
</feature>
<feature type="compositionally biased region" description="Acidic residues" evidence="2">
    <location>
        <begin position="113"/>
        <end position="127"/>
    </location>
</feature>
<feature type="modified residue" description="Phosphotyrosine" evidence="4">
    <location>
        <position position="124"/>
    </location>
</feature>
<feature type="modified residue" description="Phosphoserine" evidence="4">
    <location>
        <position position="126"/>
    </location>
</feature>
<sequence length="127" mass="14708">MSKKYGGQISFDPPARLEKDQVVAKVVQLKGSALFMVVENNGQELLVEMPPKYRNKIWVRRNGFVIVDKSEFLEKDNKIDGTILYVVQSPLKNWKKQIYWPKEFADESLNQNDSEESSSSEEEYDSD</sequence>
<protein>
    <recommendedName>
        <fullName>S1-like domain-containing protein C146.08c</fullName>
    </recommendedName>
</protein>
<accession>Q9Y803</accession>
<reference key="1">
    <citation type="journal article" date="2002" name="Nature">
        <title>The genome sequence of Schizosaccharomyces pombe.</title>
        <authorList>
            <person name="Wood V."/>
            <person name="Gwilliam R."/>
            <person name="Rajandream M.A."/>
            <person name="Lyne M.H."/>
            <person name="Lyne R."/>
            <person name="Stewart A."/>
            <person name="Sgouros J.G."/>
            <person name="Peat N."/>
            <person name="Hayles J."/>
            <person name="Baker S.G."/>
            <person name="Basham D."/>
            <person name="Bowman S."/>
            <person name="Brooks K."/>
            <person name="Brown D."/>
            <person name="Brown S."/>
            <person name="Chillingworth T."/>
            <person name="Churcher C.M."/>
            <person name="Collins M."/>
            <person name="Connor R."/>
            <person name="Cronin A."/>
            <person name="Davis P."/>
            <person name="Feltwell T."/>
            <person name="Fraser A."/>
            <person name="Gentles S."/>
            <person name="Goble A."/>
            <person name="Hamlin N."/>
            <person name="Harris D.E."/>
            <person name="Hidalgo J."/>
            <person name="Hodgson G."/>
            <person name="Holroyd S."/>
            <person name="Hornsby T."/>
            <person name="Howarth S."/>
            <person name="Huckle E.J."/>
            <person name="Hunt S."/>
            <person name="Jagels K."/>
            <person name="James K.D."/>
            <person name="Jones L."/>
            <person name="Jones M."/>
            <person name="Leather S."/>
            <person name="McDonald S."/>
            <person name="McLean J."/>
            <person name="Mooney P."/>
            <person name="Moule S."/>
            <person name="Mungall K.L."/>
            <person name="Murphy L.D."/>
            <person name="Niblett D."/>
            <person name="Odell C."/>
            <person name="Oliver K."/>
            <person name="O'Neil S."/>
            <person name="Pearson D."/>
            <person name="Quail M.A."/>
            <person name="Rabbinowitsch E."/>
            <person name="Rutherford K.M."/>
            <person name="Rutter S."/>
            <person name="Saunders D."/>
            <person name="Seeger K."/>
            <person name="Sharp S."/>
            <person name="Skelton J."/>
            <person name="Simmonds M.N."/>
            <person name="Squares R."/>
            <person name="Squares S."/>
            <person name="Stevens K."/>
            <person name="Taylor K."/>
            <person name="Taylor R.G."/>
            <person name="Tivey A."/>
            <person name="Walsh S.V."/>
            <person name="Warren T."/>
            <person name="Whitehead S."/>
            <person name="Woodward J.R."/>
            <person name="Volckaert G."/>
            <person name="Aert R."/>
            <person name="Robben J."/>
            <person name="Grymonprez B."/>
            <person name="Weltjens I."/>
            <person name="Vanstreels E."/>
            <person name="Rieger M."/>
            <person name="Schaefer M."/>
            <person name="Mueller-Auer S."/>
            <person name="Gabel C."/>
            <person name="Fuchs M."/>
            <person name="Duesterhoeft A."/>
            <person name="Fritzc C."/>
            <person name="Holzer E."/>
            <person name="Moestl D."/>
            <person name="Hilbert H."/>
            <person name="Borzym K."/>
            <person name="Langer I."/>
            <person name="Beck A."/>
            <person name="Lehrach H."/>
            <person name="Reinhardt R."/>
            <person name="Pohl T.M."/>
            <person name="Eger P."/>
            <person name="Zimmermann W."/>
            <person name="Wedler H."/>
            <person name="Wambutt R."/>
            <person name="Purnelle B."/>
            <person name="Goffeau A."/>
            <person name="Cadieu E."/>
            <person name="Dreano S."/>
            <person name="Gloux S."/>
            <person name="Lelaure V."/>
            <person name="Mottier S."/>
            <person name="Galibert F."/>
            <person name="Aves S.J."/>
            <person name="Xiang Z."/>
            <person name="Hunt C."/>
            <person name="Moore K."/>
            <person name="Hurst S.M."/>
            <person name="Lucas M."/>
            <person name="Rochet M."/>
            <person name="Gaillardin C."/>
            <person name="Tallada V.A."/>
            <person name="Garzon A."/>
            <person name="Thode G."/>
            <person name="Daga R.R."/>
            <person name="Cruzado L."/>
            <person name="Jimenez J."/>
            <person name="Sanchez M."/>
            <person name="del Rey F."/>
            <person name="Benito J."/>
            <person name="Dominguez A."/>
            <person name="Revuelta J.L."/>
            <person name="Moreno S."/>
            <person name="Armstrong J."/>
            <person name="Forsburg S.L."/>
            <person name="Cerutti L."/>
            <person name="Lowe T."/>
            <person name="McCombie W.R."/>
            <person name="Paulsen I."/>
            <person name="Potashkin J."/>
            <person name="Shpakovski G.V."/>
            <person name="Ussery D."/>
            <person name="Barrell B.G."/>
            <person name="Nurse P."/>
        </authorList>
    </citation>
    <scope>NUCLEOTIDE SEQUENCE [LARGE SCALE GENOMIC DNA]</scope>
    <source>
        <strain>972 / ATCC 24843</strain>
    </source>
</reference>
<reference key="2">
    <citation type="journal article" date="2006" name="Nat. Biotechnol.">
        <title>ORFeome cloning and global analysis of protein localization in the fission yeast Schizosaccharomyces pombe.</title>
        <authorList>
            <person name="Matsuyama A."/>
            <person name="Arai R."/>
            <person name="Yashiroda Y."/>
            <person name="Shirai A."/>
            <person name="Kamata A."/>
            <person name="Sekido S."/>
            <person name="Kobayashi Y."/>
            <person name="Hashimoto A."/>
            <person name="Hamamoto M."/>
            <person name="Hiraoka Y."/>
            <person name="Horinouchi S."/>
            <person name="Yoshida M."/>
        </authorList>
    </citation>
    <scope>SUBCELLULAR LOCATION [LARGE SCALE ANALYSIS]</scope>
</reference>
<reference key="3">
    <citation type="journal article" date="2008" name="J. Proteome Res.">
        <title>Phosphoproteome analysis of fission yeast.</title>
        <authorList>
            <person name="Wilson-Grady J.T."/>
            <person name="Villen J."/>
            <person name="Gygi S.P."/>
        </authorList>
    </citation>
    <scope>PHOSPHORYLATION [LARGE SCALE ANALYSIS] AT TYR-124 AND SER-126</scope>
    <scope>IDENTIFICATION BY MASS SPECTROMETRY</scope>
</reference>
<gene>
    <name type="ORF">SPBC146.08c</name>
</gene>
<proteinExistence type="evidence at protein level"/>
<name>YN98_SCHPO</name>